<accession>Q7L5Y1</accession>
<accession>A6NMP3</accession>
<accession>A8K9R5</accession>
<accession>B3KSL6</accession>
<accession>B3KXE4</accession>
<accession>D3DUH0</accession>
<accession>Q15407</accession>
<accession>Q15594</accession>
<accession>Q15595</accession>
<accession>Q6ZS08</accession>
<accession>Q9HAS5</accession>
<accession>Q9HAS6</accession>
<name>ENOF1_HUMAN</name>
<reference key="1">
    <citation type="journal article" date="1993" name="Nucleic Acids Res.">
        <title>Cloning and characterization of a naturally occurring antisense RNA to human thymidylate synthase mRNA.</title>
        <authorList>
            <person name="Dolnick B.J."/>
        </authorList>
    </citation>
    <scope>NUCLEOTIDE SEQUENCE [GENOMIC DNA / MRNA] (ISOFORM 2)</scope>
    <scope>VARIANT THR-145</scope>
    <source>
        <tissue>Cervix carcinoma</tissue>
    </source>
</reference>
<reference key="2">
    <citation type="journal article" date="1996" name="Cancer Res.">
        <title>Alternate splicing of the rTS gene product and its overexpression in a 5-fluorouracil-resistant cell line.</title>
        <authorList>
            <person name="Dolnick B.J."/>
            <person name="Black A.R."/>
        </authorList>
    </citation>
    <scope>NUCLEOTIDE SEQUENCE [GENOMIC DNA / MRNA] (ISOFORM 1)</scope>
    <scope>NUCLEOTIDE SEQUENCE [MRNA] OF 23-443 (ISOFORM 3)</scope>
    <scope>VARIANT THR-145</scope>
    <source>
        <tissue>Cervix carcinoma</tissue>
    </source>
</reference>
<reference key="3">
    <citation type="journal article" date="2004" name="Nat. Genet.">
        <title>Complete sequencing and characterization of 21,243 full-length human cDNAs.</title>
        <authorList>
            <person name="Ota T."/>
            <person name="Suzuki Y."/>
            <person name="Nishikawa T."/>
            <person name="Otsuki T."/>
            <person name="Sugiyama T."/>
            <person name="Irie R."/>
            <person name="Wakamatsu A."/>
            <person name="Hayashi K."/>
            <person name="Sato H."/>
            <person name="Nagai K."/>
            <person name="Kimura K."/>
            <person name="Makita H."/>
            <person name="Sekine M."/>
            <person name="Obayashi M."/>
            <person name="Nishi T."/>
            <person name="Shibahara T."/>
            <person name="Tanaka T."/>
            <person name="Ishii S."/>
            <person name="Yamamoto J."/>
            <person name="Saito K."/>
            <person name="Kawai Y."/>
            <person name="Isono Y."/>
            <person name="Nakamura Y."/>
            <person name="Nagahari K."/>
            <person name="Murakami K."/>
            <person name="Yasuda T."/>
            <person name="Iwayanagi T."/>
            <person name="Wagatsuma M."/>
            <person name="Shiratori A."/>
            <person name="Sudo H."/>
            <person name="Hosoiri T."/>
            <person name="Kaku Y."/>
            <person name="Kodaira H."/>
            <person name="Kondo H."/>
            <person name="Sugawara M."/>
            <person name="Takahashi M."/>
            <person name="Kanda K."/>
            <person name="Yokoi T."/>
            <person name="Furuya T."/>
            <person name="Kikkawa E."/>
            <person name="Omura Y."/>
            <person name="Abe K."/>
            <person name="Kamihara K."/>
            <person name="Katsuta N."/>
            <person name="Sato K."/>
            <person name="Tanikawa M."/>
            <person name="Yamazaki M."/>
            <person name="Ninomiya K."/>
            <person name="Ishibashi T."/>
            <person name="Yamashita H."/>
            <person name="Murakawa K."/>
            <person name="Fujimori K."/>
            <person name="Tanai H."/>
            <person name="Kimata M."/>
            <person name="Watanabe M."/>
            <person name="Hiraoka S."/>
            <person name="Chiba Y."/>
            <person name="Ishida S."/>
            <person name="Ono Y."/>
            <person name="Takiguchi S."/>
            <person name="Watanabe S."/>
            <person name="Yosida M."/>
            <person name="Hotuta T."/>
            <person name="Kusano J."/>
            <person name="Kanehori K."/>
            <person name="Takahashi-Fujii A."/>
            <person name="Hara H."/>
            <person name="Tanase T.-O."/>
            <person name="Nomura Y."/>
            <person name="Togiya S."/>
            <person name="Komai F."/>
            <person name="Hara R."/>
            <person name="Takeuchi K."/>
            <person name="Arita M."/>
            <person name="Imose N."/>
            <person name="Musashino K."/>
            <person name="Yuuki H."/>
            <person name="Oshima A."/>
            <person name="Sasaki N."/>
            <person name="Aotsuka S."/>
            <person name="Yoshikawa Y."/>
            <person name="Matsunawa H."/>
            <person name="Ichihara T."/>
            <person name="Shiohata N."/>
            <person name="Sano S."/>
            <person name="Moriya S."/>
            <person name="Momiyama H."/>
            <person name="Satoh N."/>
            <person name="Takami S."/>
            <person name="Terashima Y."/>
            <person name="Suzuki O."/>
            <person name="Nakagawa S."/>
            <person name="Senoh A."/>
            <person name="Mizoguchi H."/>
            <person name="Goto Y."/>
            <person name="Shimizu F."/>
            <person name="Wakebe H."/>
            <person name="Hishigaki H."/>
            <person name="Watanabe T."/>
            <person name="Sugiyama A."/>
            <person name="Takemoto M."/>
            <person name="Kawakami B."/>
            <person name="Yamazaki M."/>
            <person name="Watanabe K."/>
            <person name="Kumagai A."/>
            <person name="Itakura S."/>
            <person name="Fukuzumi Y."/>
            <person name="Fujimori Y."/>
            <person name="Komiyama M."/>
            <person name="Tashiro H."/>
            <person name="Tanigami A."/>
            <person name="Fujiwara T."/>
            <person name="Ono T."/>
            <person name="Yamada K."/>
            <person name="Fujii Y."/>
            <person name="Ozaki K."/>
            <person name="Hirao M."/>
            <person name="Ohmori Y."/>
            <person name="Kawabata A."/>
            <person name="Hikiji T."/>
            <person name="Kobatake N."/>
            <person name="Inagaki H."/>
            <person name="Ikema Y."/>
            <person name="Okamoto S."/>
            <person name="Okitani R."/>
            <person name="Kawakami T."/>
            <person name="Noguchi S."/>
            <person name="Itoh T."/>
            <person name="Shigeta K."/>
            <person name="Senba T."/>
            <person name="Matsumura K."/>
            <person name="Nakajima Y."/>
            <person name="Mizuno T."/>
            <person name="Morinaga M."/>
            <person name="Sasaki M."/>
            <person name="Togashi T."/>
            <person name="Oyama M."/>
            <person name="Hata H."/>
            <person name="Watanabe M."/>
            <person name="Komatsu T."/>
            <person name="Mizushima-Sugano J."/>
            <person name="Satoh T."/>
            <person name="Shirai Y."/>
            <person name="Takahashi Y."/>
            <person name="Nakagawa K."/>
            <person name="Okumura K."/>
            <person name="Nagase T."/>
            <person name="Nomura N."/>
            <person name="Kikuchi H."/>
            <person name="Masuho Y."/>
            <person name="Yamashita R."/>
            <person name="Nakai K."/>
            <person name="Yada T."/>
            <person name="Nakamura Y."/>
            <person name="Ohara O."/>
            <person name="Isogai T."/>
            <person name="Sugano S."/>
        </authorList>
    </citation>
    <scope>NUCLEOTIDE SEQUENCE [LARGE SCALE MRNA] (ISOFORMS 1; 5; 6 AND 7)</scope>
    <scope>VARIANT THR-145</scope>
    <source>
        <tissue>Trachea</tissue>
    </source>
</reference>
<reference key="4">
    <citation type="journal article" date="2005" name="Nature">
        <title>DNA sequence and analysis of human chromosome 18.</title>
        <authorList>
            <person name="Nusbaum C."/>
            <person name="Zody M.C."/>
            <person name="Borowsky M.L."/>
            <person name="Kamal M."/>
            <person name="Kodira C.D."/>
            <person name="Taylor T.D."/>
            <person name="Whittaker C.A."/>
            <person name="Chang J.L."/>
            <person name="Cuomo C.A."/>
            <person name="Dewar K."/>
            <person name="FitzGerald M.G."/>
            <person name="Yang X."/>
            <person name="Abouelleil A."/>
            <person name="Allen N.R."/>
            <person name="Anderson S."/>
            <person name="Bloom T."/>
            <person name="Bugalter B."/>
            <person name="Butler J."/>
            <person name="Cook A."/>
            <person name="DeCaprio D."/>
            <person name="Engels R."/>
            <person name="Garber M."/>
            <person name="Gnirke A."/>
            <person name="Hafez N."/>
            <person name="Hall J.L."/>
            <person name="Norman C.H."/>
            <person name="Itoh T."/>
            <person name="Jaffe D.B."/>
            <person name="Kuroki Y."/>
            <person name="Lehoczky J."/>
            <person name="Lui A."/>
            <person name="Macdonald P."/>
            <person name="Mauceli E."/>
            <person name="Mikkelsen T.S."/>
            <person name="Naylor J.W."/>
            <person name="Nicol R."/>
            <person name="Nguyen C."/>
            <person name="Noguchi H."/>
            <person name="O'Leary S.B."/>
            <person name="Piqani B."/>
            <person name="Smith C.L."/>
            <person name="Talamas J.A."/>
            <person name="Topham K."/>
            <person name="Totoki Y."/>
            <person name="Toyoda A."/>
            <person name="Wain H.M."/>
            <person name="Young S.K."/>
            <person name="Zeng Q."/>
            <person name="Zimmer A.R."/>
            <person name="Fujiyama A."/>
            <person name="Hattori M."/>
            <person name="Birren B.W."/>
            <person name="Sakaki Y."/>
            <person name="Lander E.S."/>
        </authorList>
    </citation>
    <scope>NUCLEOTIDE SEQUENCE [LARGE SCALE GENOMIC DNA]</scope>
</reference>
<reference key="5">
    <citation type="submission" date="2005-09" db="EMBL/GenBank/DDBJ databases">
        <authorList>
            <person name="Mural R.J."/>
            <person name="Istrail S."/>
            <person name="Sutton G.G."/>
            <person name="Florea L."/>
            <person name="Halpern A.L."/>
            <person name="Mobarry C.M."/>
            <person name="Lippert R."/>
            <person name="Walenz B."/>
            <person name="Shatkay H."/>
            <person name="Dew I."/>
            <person name="Miller J.R."/>
            <person name="Flanigan M.J."/>
            <person name="Edwards N.J."/>
            <person name="Bolanos R."/>
            <person name="Fasulo D."/>
            <person name="Halldorsson B.V."/>
            <person name="Hannenhalli S."/>
            <person name="Turner R."/>
            <person name="Yooseph S."/>
            <person name="Lu F."/>
            <person name="Nusskern D.R."/>
            <person name="Shue B.C."/>
            <person name="Zheng X.H."/>
            <person name="Zhong F."/>
            <person name="Delcher A.L."/>
            <person name="Huson D.H."/>
            <person name="Kravitz S.A."/>
            <person name="Mouchard L."/>
            <person name="Reinert K."/>
            <person name="Remington K.A."/>
            <person name="Clark A.G."/>
            <person name="Waterman M.S."/>
            <person name="Eichler E.E."/>
            <person name="Adams M.D."/>
            <person name="Hunkapiller M.W."/>
            <person name="Myers E.W."/>
            <person name="Venter J.C."/>
        </authorList>
    </citation>
    <scope>NUCLEOTIDE SEQUENCE [LARGE SCALE GENOMIC DNA]</scope>
    <scope>VARIANT THR-145</scope>
</reference>
<reference key="6">
    <citation type="journal article" date="2004" name="Genome Res.">
        <title>The status, quality, and expansion of the NIH full-length cDNA project: the Mammalian Gene Collection (MGC).</title>
        <authorList>
            <consortium name="The MGC Project Team"/>
        </authorList>
    </citation>
    <scope>NUCLEOTIDE SEQUENCE [LARGE SCALE MRNA] (ISOFORM 1)</scope>
    <source>
        <tissue>Placenta</tissue>
    </source>
</reference>
<reference key="7">
    <citation type="journal article" date="1996" name="Adv. Enzyme Regul.">
        <title>rTS gene expression is associated with altered cell sensitivity to thymidylate synthase inhibitors.</title>
        <authorList>
            <person name="Dolnick B.J."/>
            <person name="Black A.R."/>
            <person name="Winkler P.M."/>
            <person name="Schindler K."/>
            <person name="Hsueh C.-T."/>
        </authorList>
    </citation>
    <scope>ORIGINALLY PROPOSED FUNCTION</scope>
</reference>
<reference key="8">
    <citation type="journal article" date="2002" name="Biochim. Biophys. Acta">
        <title>Natural antisense (rTSalpha) RNA induces site-specific cleavage of thymidylate synthase mRNA.</title>
        <authorList>
            <person name="Chu J."/>
            <person name="Dolnick B.J."/>
        </authorList>
    </citation>
    <scope>ORIGINALLY PROPOSED FUNCTION</scope>
</reference>
<reference key="9">
    <citation type="journal article" date="2005" name="BMC Genomics">
        <title>Comparative genomic analysis reveals a novel mitochondrial isoform of human rTS protein and unusual phylogenetic distribution of the rTS gene.</title>
        <authorList>
            <person name="Liang P."/>
            <person name="Nair J.R."/>
            <person name="Song L."/>
            <person name="McGuire J.J."/>
            <person name="Dolnick B.J."/>
        </authorList>
    </citation>
    <scope>SUBCELLULAR LOCATION</scope>
</reference>
<reference key="10">
    <citation type="journal article" date="2005" name="Cancer Res.">
        <title>Enhancement of 5-fluorouracil sensitivity by an rTS signaling mimic in H630 colon cancer cells.</title>
        <authorList>
            <person name="Dolnick R."/>
            <person name="Wu Q."/>
            <person name="Angelino N.J."/>
            <person name="Stephanie L.V."/>
            <person name="Chow K.-C."/>
            <person name="Sufrin J.R."/>
            <person name="Dolnick B.J."/>
        </authorList>
    </citation>
    <scope>PHOSPHORYLATION AT SER-148</scope>
    <scope>SUMOYLATION</scope>
</reference>
<reference key="11">
    <citation type="journal article" date="2011" name="BMC Syst. Biol.">
        <title>Initial characterization of the human central proteome.</title>
        <authorList>
            <person name="Burkard T.R."/>
            <person name="Planyavsky M."/>
            <person name="Kaupe I."/>
            <person name="Breitwieser F.P."/>
            <person name="Buerckstuemmer T."/>
            <person name="Bennett K.L."/>
            <person name="Superti-Furga G."/>
            <person name="Colinge J."/>
        </authorList>
    </citation>
    <scope>IDENTIFICATION BY MASS SPECTROMETRY [LARGE SCALE ANALYSIS]</scope>
</reference>
<reference key="12">
    <citation type="journal article" date="2014" name="J. Proteomics">
        <title>An enzyme assisted RP-RPLC approach for in-depth analysis of human liver phosphoproteome.</title>
        <authorList>
            <person name="Bian Y."/>
            <person name="Song C."/>
            <person name="Cheng K."/>
            <person name="Dong M."/>
            <person name="Wang F."/>
            <person name="Huang J."/>
            <person name="Sun D."/>
            <person name="Wang L."/>
            <person name="Ye M."/>
            <person name="Zou H."/>
        </authorList>
    </citation>
    <scope>IDENTIFICATION BY MASS SPECTROMETRY [LARGE SCALE ANALYSIS]</scope>
    <source>
        <tissue>Liver</tissue>
    </source>
</reference>
<reference key="13">
    <citation type="journal article" date="2022" name="Am. J. Hum. Genet.">
        <title>Germline thymidylate synthase deficiency impacts nucleotide metabolism and causes dyskeratosis congenita.</title>
        <authorList>
            <person name="Tummala H."/>
            <person name="Walne A."/>
            <person name="Buccafusca R."/>
            <person name="Alnajar J."/>
            <person name="Szabo A."/>
            <person name="Robinson P."/>
            <person name="McConkie-Rosell A."/>
            <person name="Wilson M."/>
            <person name="Crowley S."/>
            <person name="Kinsler V."/>
            <person name="Ewins A.M."/>
            <person name="Madapura P.M."/>
            <person name="Patel M."/>
            <person name="Pontikos N."/>
            <person name="Codd V."/>
            <person name="Vulliamy T."/>
            <person name="Dokal I."/>
        </authorList>
    </citation>
    <scope>INVOLVEMENT IN DKCD</scope>
</reference>
<reference key="14">
    <citation type="journal article" date="2014" name="Biochemistry">
        <title>Enzymatic and structural characterization of rTSgamma provides insights into the function of rTSbeta.</title>
        <authorList>
            <person name="Wichelecki D.J."/>
            <person name="Froese D.S."/>
            <person name="Kopec J."/>
            <person name="Muniz J.R."/>
            <person name="Yue W.W."/>
            <person name="Gerlt J.A."/>
        </authorList>
    </citation>
    <scope>X-RAY CRYSTALLOGRAPHY (1.74 ANGSTROMS) OF 1-440 IN COMPLEX WITH MAGNESIUM</scope>
    <scope>CATALYTIC ACTIVITY</scope>
    <scope>FUNCTION</scope>
    <scope>COFACTOR</scope>
    <scope>BIOPHYSICOCHEMICAL PROPERTIES</scope>
    <scope>MUTAGENESIS OF 1-MET--HIS-27</scope>
</reference>
<feature type="chain" id="PRO_0000331652" description="Mitochondrial enolase superfamily member 1">
    <location>
        <begin position="1"/>
        <end position="443"/>
    </location>
</feature>
<feature type="active site" description="Proton donor/acceptor" evidence="1">
    <location>
        <position position="222"/>
    </location>
</feature>
<feature type="active site" evidence="2">
    <location>
        <position position="355"/>
    </location>
</feature>
<feature type="binding site" evidence="1">
    <location>
        <begin position="24"/>
        <end position="26"/>
    </location>
    <ligand>
        <name>substrate</name>
    </ligand>
</feature>
<feature type="binding site" evidence="1">
    <location>
        <position position="34"/>
    </location>
    <ligand>
        <name>substrate</name>
    </ligand>
</feature>
<feature type="binding site" evidence="1">
    <location>
        <position position="220"/>
    </location>
    <ligand>
        <name>substrate</name>
    </ligand>
</feature>
<feature type="binding site" evidence="6">
    <location>
        <position position="250"/>
    </location>
    <ligand>
        <name>Mg(2+)</name>
        <dbReference type="ChEBI" id="CHEBI:18420"/>
    </ligand>
</feature>
<feature type="binding site" evidence="1">
    <location>
        <position position="252"/>
    </location>
    <ligand>
        <name>substrate</name>
    </ligand>
</feature>
<feature type="binding site" evidence="6">
    <location>
        <position position="276"/>
    </location>
    <ligand>
        <name>Mg(2+)</name>
        <dbReference type="ChEBI" id="CHEBI:18420"/>
    </ligand>
</feature>
<feature type="binding site" evidence="1">
    <location>
        <position position="276"/>
    </location>
    <ligand>
        <name>substrate</name>
    </ligand>
</feature>
<feature type="binding site" evidence="6">
    <location>
        <position position="305"/>
    </location>
    <ligand>
        <name>Mg(2+)</name>
        <dbReference type="ChEBI" id="CHEBI:18420"/>
    </ligand>
</feature>
<feature type="binding site" evidence="1">
    <location>
        <position position="305"/>
    </location>
    <ligand>
        <name>substrate</name>
    </ligand>
</feature>
<feature type="binding site" evidence="1">
    <location>
        <begin position="355"/>
        <end position="357"/>
    </location>
    <ligand>
        <name>substrate</name>
    </ligand>
</feature>
<feature type="binding site" evidence="1">
    <location>
        <position position="386"/>
    </location>
    <ligand>
        <name>substrate</name>
    </ligand>
</feature>
<feature type="modified residue" description="Phosphoserine" evidence="4">
    <location>
        <position position="148"/>
    </location>
</feature>
<feature type="splice variant" id="VSP_055241" description="In isoform 7." evidence="11">
    <location>
        <begin position="1"/>
        <end position="230"/>
    </location>
</feature>
<feature type="splice variant" id="VSP_055242" description="In isoform 6." evidence="11">
    <location>
        <begin position="1"/>
        <end position="181"/>
    </location>
</feature>
<feature type="splice variant" id="VSP_033311" description="In isoform 2." evidence="12">
    <location>
        <begin position="1"/>
        <end position="102"/>
    </location>
</feature>
<feature type="splice variant" id="VSP_047153" description="In isoform 4." evidence="14">
    <original>MVRGRISRLSVRDVRFPTSLGGHG</original>
    <variation>MVSADAMVSADAMVSADAMVSADAMVSADAMVSADAMVSADAMVS</variation>
    <location>
        <begin position="1"/>
        <end position="24"/>
    </location>
</feature>
<feature type="splice variant" id="VSP_055243" description="In isoform 5." evidence="11">
    <original>MVRGRISRLSVRDVRFPTSLGGHG</original>
    <variation>MVSADAMVSADAMVSADAMVSADAMVSADAMVSADAMVSADAMVSADAMVSADAMVSADAMVSADAMVS</variation>
    <location>
        <begin position="1"/>
        <end position="24"/>
    </location>
</feature>
<feature type="splice variant" id="VSP_033312" description="In isoform 3." evidence="13">
    <original>VVCAVNALAHHVLNKDLKDIVGDFRGFYRQLTSDGQLRWIGPEKGVVHLATAA</original>
    <variation>DWSRKGRGAPGDSGRPKRGVGLVGQAGGKACLEVTCGHGSQDAGILHRFQVHH</variation>
    <location>
        <begin position="65"/>
        <end position="117"/>
    </location>
</feature>
<feature type="splice variant" id="VSP_033313" description="In isoform 2." evidence="12">
    <original>W</original>
    <variation>MQKMESRGVELPSLWEKALKL</variation>
    <location>
        <position position="103"/>
    </location>
</feature>
<feature type="splice variant" id="VSP_033314" description="In isoform 3." evidence="13">
    <location>
        <begin position="118"/>
        <end position="443"/>
    </location>
</feature>
<feature type="splice variant" id="VSP_047154" description="In isoform 4 and isoform 5." evidence="11">
    <location>
        <begin position="293"/>
        <end position="306"/>
    </location>
</feature>
<feature type="sequence variant" id="VAR_042933" description="In dbSNP:rs34724061.">
    <original>D</original>
    <variation>E</variation>
    <location>
        <position position="31"/>
    </location>
</feature>
<feature type="sequence variant" id="VAR_042934" description="In dbSNP:rs2612086." evidence="3 8 9 10">
    <original>M</original>
    <variation>T</variation>
    <location>
        <position position="145"/>
    </location>
</feature>
<feature type="sequence variant" id="VAR_042935" description="In dbSNP:rs2847620.">
    <original>Y</original>
    <variation>S</variation>
    <location>
        <position position="428"/>
    </location>
</feature>
<feature type="mutagenesis site" description="Impairs protein solubility. Abolishes catalytic activity." evidence="6">
    <location>
        <begin position="1"/>
        <end position="27"/>
    </location>
</feature>
<feature type="strand" evidence="18">
    <location>
        <begin position="5"/>
        <end position="15"/>
    </location>
</feature>
<feature type="helix" evidence="18">
    <location>
        <begin position="18"/>
        <end position="20"/>
    </location>
</feature>
<feature type="strand" evidence="18">
    <location>
        <begin position="35"/>
        <end position="45"/>
    </location>
</feature>
<feature type="strand" evidence="18">
    <location>
        <begin position="51"/>
        <end position="57"/>
    </location>
</feature>
<feature type="helix" evidence="18">
    <location>
        <begin position="62"/>
        <end position="72"/>
    </location>
</feature>
<feature type="helix" evidence="18">
    <location>
        <begin position="73"/>
        <end position="75"/>
    </location>
</feature>
<feature type="turn" evidence="18">
    <location>
        <begin position="76"/>
        <end position="78"/>
    </location>
</feature>
<feature type="helix" evidence="18">
    <location>
        <begin position="81"/>
        <end position="85"/>
    </location>
</feature>
<feature type="helix" evidence="18">
    <location>
        <begin position="88"/>
        <end position="96"/>
    </location>
</feature>
<feature type="helix" evidence="18">
    <location>
        <begin position="101"/>
        <end position="104"/>
    </location>
</feature>
<feature type="strand" evidence="18">
    <location>
        <begin position="106"/>
        <end position="108"/>
    </location>
</feature>
<feature type="helix" evidence="18">
    <location>
        <begin position="109"/>
        <end position="130"/>
    </location>
</feature>
<feature type="helix" evidence="18">
    <location>
        <begin position="134"/>
        <end position="140"/>
    </location>
</feature>
<feature type="helix" evidence="18">
    <location>
        <begin position="143"/>
        <end position="147"/>
    </location>
</feature>
<feature type="turn" evidence="18">
    <location>
        <begin position="153"/>
        <end position="158"/>
    </location>
</feature>
<feature type="helix" evidence="18">
    <location>
        <begin position="161"/>
        <end position="170"/>
    </location>
</feature>
<feature type="turn" evidence="18">
    <location>
        <begin position="171"/>
        <end position="174"/>
    </location>
</feature>
<feature type="helix" evidence="18">
    <location>
        <begin position="175"/>
        <end position="185"/>
    </location>
</feature>
<feature type="strand" evidence="18">
    <location>
        <begin position="187"/>
        <end position="191"/>
    </location>
</feature>
<feature type="helix" evidence="18">
    <location>
        <begin position="201"/>
        <end position="213"/>
    </location>
</feature>
<feature type="strand" evidence="18">
    <location>
        <begin position="218"/>
        <end position="222"/>
    </location>
</feature>
<feature type="helix" evidence="18">
    <location>
        <begin position="227"/>
        <end position="241"/>
    </location>
</feature>
<feature type="strand" evidence="18">
    <location>
        <begin position="245"/>
        <end position="250"/>
    </location>
</feature>
<feature type="helix" evidence="18">
    <location>
        <begin position="257"/>
        <end position="267"/>
    </location>
</feature>
<feature type="helix" evidence="18">
    <location>
        <begin position="268"/>
        <end position="270"/>
    </location>
</feature>
<feature type="strand" evidence="18">
    <location>
        <begin position="273"/>
        <end position="276"/>
    </location>
</feature>
<feature type="helix" evidence="18">
    <location>
        <begin position="284"/>
        <end position="294"/>
    </location>
</feature>
<feature type="helix" evidence="18">
    <location>
        <begin position="295"/>
        <end position="297"/>
    </location>
</feature>
<feature type="strand" evidence="18">
    <location>
        <begin position="300"/>
        <end position="303"/>
    </location>
</feature>
<feature type="helix" evidence="18">
    <location>
        <begin position="310"/>
        <end position="318"/>
    </location>
</feature>
<feature type="strand" evidence="18">
    <location>
        <begin position="323"/>
        <end position="325"/>
    </location>
</feature>
<feature type="turn" evidence="18">
    <location>
        <begin position="329"/>
        <end position="331"/>
    </location>
</feature>
<feature type="helix" evidence="18">
    <location>
        <begin position="334"/>
        <end position="347"/>
    </location>
</feature>
<feature type="turn" evidence="18">
    <location>
        <begin position="358"/>
        <end position="360"/>
    </location>
</feature>
<feature type="helix" evidence="18">
    <location>
        <begin position="361"/>
        <end position="375"/>
    </location>
</feature>
<feature type="strand" evidence="18">
    <location>
        <begin position="385"/>
        <end position="387"/>
    </location>
</feature>
<feature type="helix" evidence="18">
    <location>
        <begin position="392"/>
        <end position="394"/>
    </location>
</feature>
<feature type="strand" evidence="18">
    <location>
        <begin position="395"/>
        <end position="397"/>
    </location>
</feature>
<feature type="strand" evidence="18">
    <location>
        <begin position="400"/>
        <end position="407"/>
    </location>
</feature>
<feature type="strand" evidence="18">
    <location>
        <begin position="411"/>
        <end position="413"/>
    </location>
</feature>
<feature type="helix" evidence="18">
    <location>
        <begin position="420"/>
        <end position="426"/>
    </location>
</feature>
<feature type="turn" evidence="18">
    <location>
        <begin position="428"/>
        <end position="430"/>
    </location>
</feature>
<feature type="helix" evidence="18">
    <location>
        <begin position="432"/>
        <end position="437"/>
    </location>
</feature>
<keyword id="KW-0002">3D-structure</keyword>
<keyword id="KW-0025">Alternative splicing</keyword>
<keyword id="KW-1011">Dyskeratosis congenita</keyword>
<keyword id="KW-0413">Isomerase</keyword>
<keyword id="KW-0456">Lyase</keyword>
<keyword id="KW-0460">Magnesium</keyword>
<keyword id="KW-0479">Metal-binding</keyword>
<keyword id="KW-0496">Mitochondrion</keyword>
<keyword id="KW-0597">Phosphoprotein</keyword>
<keyword id="KW-1267">Proteomics identification</keyword>
<keyword id="KW-1185">Reference proteome</keyword>
<keyword id="KW-0832">Ubl conjugation</keyword>
<gene>
    <name type="primary">ENOSF1</name>
    <name type="synonym">RTS</name>
    <name type="synonym">TYMSAS</name>
</gene>
<evidence type="ECO:0000250" key="1">
    <source>
        <dbReference type="UniProtKB" id="Q8P3K2"/>
    </source>
</evidence>
<evidence type="ECO:0000255" key="2"/>
<evidence type="ECO:0000269" key="3">
    <source>
    </source>
</evidence>
<evidence type="ECO:0000269" key="4">
    <source>
    </source>
</evidence>
<evidence type="ECO:0000269" key="5">
    <source>
    </source>
</evidence>
<evidence type="ECO:0000269" key="6">
    <source>
    </source>
</evidence>
<evidence type="ECO:0000269" key="7">
    <source>
    </source>
</evidence>
<evidence type="ECO:0000269" key="8">
    <source>
    </source>
</evidence>
<evidence type="ECO:0000269" key="9">
    <source>
    </source>
</evidence>
<evidence type="ECO:0000269" key="10">
    <source ref="5"/>
</evidence>
<evidence type="ECO:0000303" key="11">
    <source>
    </source>
</evidence>
<evidence type="ECO:0000303" key="12">
    <source>
    </source>
</evidence>
<evidence type="ECO:0000303" key="13">
    <source>
    </source>
</evidence>
<evidence type="ECO:0000305" key="14"/>
<evidence type="ECO:0000305" key="15">
    <source>
    </source>
</evidence>
<evidence type="ECO:0000305" key="16">
    <source>
    </source>
</evidence>
<evidence type="ECO:0000305" key="17">
    <source>
    </source>
</evidence>
<evidence type="ECO:0007829" key="18">
    <source>
        <dbReference type="PDB" id="4A35"/>
    </source>
</evidence>
<dbReference type="EC" id="4.2.1.68" evidence="6"/>
<dbReference type="EMBL" id="AF305057">
    <property type="protein sequence ID" value="AAG29536.1"/>
    <property type="molecule type" value="Genomic_DNA"/>
</dbReference>
<dbReference type="EMBL" id="X67098">
    <property type="protein sequence ID" value="CAA47472.1"/>
    <property type="molecule type" value="mRNA"/>
</dbReference>
<dbReference type="EMBL" id="AF305057">
    <property type="protein sequence ID" value="AAG29537.1"/>
    <property type="status" value="ALT_INIT"/>
    <property type="molecule type" value="Genomic_DNA"/>
</dbReference>
<dbReference type="EMBL" id="X67098">
    <property type="protein sequence ID" value="CAA47471.1"/>
    <property type="status" value="ALT_INIT"/>
    <property type="molecule type" value="mRNA"/>
</dbReference>
<dbReference type="EMBL" id="X89602">
    <property type="protein sequence ID" value="CAA61761.1"/>
    <property type="molecule type" value="mRNA"/>
</dbReference>
<dbReference type="EMBL" id="AK127818">
    <property type="protein sequence ID" value="BAC87148.1"/>
    <property type="molecule type" value="mRNA"/>
</dbReference>
<dbReference type="EMBL" id="AK093873">
    <property type="protein sequence ID" value="BAG52778.1"/>
    <property type="molecule type" value="mRNA"/>
</dbReference>
<dbReference type="EMBL" id="AK127219">
    <property type="protein sequence ID" value="BAG54456.1"/>
    <property type="molecule type" value="mRNA"/>
</dbReference>
<dbReference type="EMBL" id="AK292780">
    <property type="protein sequence ID" value="BAF85469.1"/>
    <property type="molecule type" value="mRNA"/>
</dbReference>
<dbReference type="EMBL" id="AP001178">
    <property type="status" value="NOT_ANNOTATED_CDS"/>
    <property type="molecule type" value="Genomic_DNA"/>
</dbReference>
<dbReference type="EMBL" id="CH471113">
    <property type="protein sequence ID" value="EAX01713.1"/>
    <property type="molecule type" value="Genomic_DNA"/>
</dbReference>
<dbReference type="EMBL" id="CH471113">
    <property type="protein sequence ID" value="EAX01714.1"/>
    <property type="molecule type" value="Genomic_DNA"/>
</dbReference>
<dbReference type="EMBL" id="CH471113">
    <property type="protein sequence ID" value="EAX01715.1"/>
    <property type="molecule type" value="Genomic_DNA"/>
</dbReference>
<dbReference type="EMBL" id="BC001285">
    <property type="protein sequence ID" value="AAH01285.2"/>
    <property type="molecule type" value="mRNA"/>
</dbReference>
<dbReference type="CCDS" id="CCDS11822.1">
    <molecule id="Q7L5Y1-1"/>
</dbReference>
<dbReference type="CCDS" id="CCDS45821.1">
    <molecule id="Q7L5Y1-2"/>
</dbReference>
<dbReference type="RefSeq" id="NP_001119595.1">
    <property type="nucleotide sequence ID" value="NM_001126123.3"/>
</dbReference>
<dbReference type="RefSeq" id="NP_001305688.1">
    <property type="nucleotide sequence ID" value="NM_001318759.1"/>
</dbReference>
<dbReference type="RefSeq" id="NP_001305689.1">
    <molecule id="Q7L5Y1-6"/>
    <property type="nucleotide sequence ID" value="NM_001318760.2"/>
</dbReference>
<dbReference type="RefSeq" id="NP_001340994.1">
    <molecule id="Q7L5Y1-2"/>
    <property type="nucleotide sequence ID" value="NM_001354065.2"/>
</dbReference>
<dbReference type="RefSeq" id="NP_059982.2">
    <molecule id="Q7L5Y1-1"/>
    <property type="nucleotide sequence ID" value="NM_017512.5"/>
</dbReference>
<dbReference type="RefSeq" id="NP_974487.1">
    <property type="nucleotide sequence ID" value="NM_202758.3"/>
</dbReference>
<dbReference type="RefSeq" id="XP_016881324.1">
    <property type="nucleotide sequence ID" value="XM_017025835.1"/>
</dbReference>
<dbReference type="RefSeq" id="XP_016881325.1">
    <property type="nucleotide sequence ID" value="XM_017025836.1"/>
</dbReference>
<dbReference type="RefSeq" id="XP_047293576.1">
    <molecule id="Q7L5Y1-6"/>
    <property type="nucleotide sequence ID" value="XM_047437620.1"/>
</dbReference>
<dbReference type="RefSeq" id="XP_047293577.1">
    <molecule id="Q7L5Y1-6"/>
    <property type="nucleotide sequence ID" value="XM_047437621.1"/>
</dbReference>
<dbReference type="RefSeq" id="XP_054174773.1">
    <molecule id="Q7L5Y1-6"/>
    <property type="nucleotide sequence ID" value="XM_054318798.1"/>
</dbReference>
<dbReference type="RefSeq" id="XP_054174774.1">
    <molecule id="Q7L5Y1-6"/>
    <property type="nucleotide sequence ID" value="XM_054318799.1"/>
</dbReference>
<dbReference type="RefSeq" id="XP_054174775.1">
    <molecule id="Q7L5Y1-6"/>
    <property type="nucleotide sequence ID" value="XM_054318800.1"/>
</dbReference>
<dbReference type="PDB" id="4A35">
    <property type="method" value="X-ray"/>
    <property type="resolution" value="1.74 A"/>
    <property type="chains" value="A=1-440"/>
</dbReference>
<dbReference type="PDBsum" id="4A35"/>
<dbReference type="SMR" id="Q7L5Y1"/>
<dbReference type="BioGRID" id="120716">
    <property type="interactions" value="15"/>
</dbReference>
<dbReference type="FunCoup" id="Q7L5Y1">
    <property type="interactions" value="46"/>
</dbReference>
<dbReference type="IntAct" id="Q7L5Y1">
    <property type="interactions" value="7"/>
</dbReference>
<dbReference type="STRING" id="9606.ENSP00000497230"/>
<dbReference type="GlyGen" id="Q7L5Y1">
    <property type="glycosylation" value="1 site, 1 O-linked glycan (1 site)"/>
</dbReference>
<dbReference type="iPTMnet" id="Q7L5Y1"/>
<dbReference type="PhosphoSitePlus" id="Q7L5Y1"/>
<dbReference type="BioMuta" id="ENOSF1"/>
<dbReference type="DMDM" id="74739173"/>
<dbReference type="jPOST" id="Q7L5Y1"/>
<dbReference type="MassIVE" id="Q7L5Y1"/>
<dbReference type="PaxDb" id="9606-ENSP00000345974"/>
<dbReference type="PeptideAtlas" id="Q7L5Y1"/>
<dbReference type="ProteomicsDB" id="1550"/>
<dbReference type="ProteomicsDB" id="3646"/>
<dbReference type="ProteomicsDB" id="68814">
    <molecule id="Q7L5Y1-1"/>
</dbReference>
<dbReference type="ProteomicsDB" id="68815">
    <molecule id="Q7L5Y1-2"/>
</dbReference>
<dbReference type="ProteomicsDB" id="68816">
    <molecule id="Q7L5Y1-3"/>
</dbReference>
<dbReference type="Pumba" id="Q7L5Y1"/>
<dbReference type="Antibodypedia" id="21907">
    <property type="antibodies" value="151 antibodies from 22 providers"/>
</dbReference>
<dbReference type="DNASU" id="55556"/>
<dbReference type="Ensembl" id="ENST00000383578.7">
    <molecule id="Q7L5Y1-2"/>
    <property type="protein sequence ID" value="ENSP00000373072.3"/>
    <property type="gene ID" value="ENSG00000132199.20"/>
</dbReference>
<dbReference type="Ensembl" id="ENST00000647584.2">
    <molecule id="Q7L5Y1-1"/>
    <property type="protein sequence ID" value="ENSP00000497230.2"/>
    <property type="gene ID" value="ENSG00000132199.20"/>
</dbReference>
<dbReference type="GeneID" id="55556"/>
<dbReference type="KEGG" id="hsa:55556"/>
<dbReference type="MANE-Select" id="ENST00000647584.2">
    <property type="protein sequence ID" value="ENSP00000497230.2"/>
    <property type="RefSeq nucleotide sequence ID" value="NM_017512.7"/>
    <property type="RefSeq protein sequence ID" value="NP_059982.2"/>
</dbReference>
<dbReference type="UCSC" id="uc002kkt.4">
    <molecule id="Q7L5Y1-1"/>
    <property type="organism name" value="human"/>
</dbReference>
<dbReference type="AGR" id="HGNC:30365"/>
<dbReference type="CTD" id="55556"/>
<dbReference type="DisGeNET" id="55556"/>
<dbReference type="GeneCards" id="ENOSF1"/>
<dbReference type="HGNC" id="HGNC:30365">
    <property type="gene designation" value="ENOSF1"/>
</dbReference>
<dbReference type="HPA" id="ENSG00000132199">
    <property type="expression patterns" value="Low tissue specificity"/>
</dbReference>
<dbReference type="MalaCards" id="ENOSF1"/>
<dbReference type="MIM" id="607427">
    <property type="type" value="gene"/>
</dbReference>
<dbReference type="MIM" id="620040">
    <property type="type" value="phenotype"/>
</dbReference>
<dbReference type="neXtProt" id="NX_Q7L5Y1"/>
<dbReference type="OpenTargets" id="ENSG00000132199"/>
<dbReference type="PharmGKB" id="PA134897613"/>
<dbReference type="VEuPathDB" id="HostDB:ENSG00000132199"/>
<dbReference type="eggNOG" id="ENOG502QU7C">
    <property type="taxonomic scope" value="Eukaryota"/>
</dbReference>
<dbReference type="GeneTree" id="ENSGT00390000014290"/>
<dbReference type="HOGENOM" id="CLU_030273_2_2_1"/>
<dbReference type="InParanoid" id="Q7L5Y1"/>
<dbReference type="OMA" id="SGAIDVC"/>
<dbReference type="OrthoDB" id="14161at2759"/>
<dbReference type="PAN-GO" id="Q7L5Y1">
    <property type="GO annotations" value="3 GO annotations based on evolutionary models"/>
</dbReference>
<dbReference type="PhylomeDB" id="Q7L5Y1"/>
<dbReference type="TreeFam" id="TF300529"/>
<dbReference type="PathwayCommons" id="Q7L5Y1"/>
<dbReference type="SignaLink" id="Q7L5Y1"/>
<dbReference type="BioGRID-ORCS" id="55556">
    <property type="hits" value="11 hits in 1152 CRISPR screens"/>
</dbReference>
<dbReference type="ChiTaRS" id="ENOSF1">
    <property type="organism name" value="human"/>
</dbReference>
<dbReference type="EvolutionaryTrace" id="Q7L5Y1"/>
<dbReference type="GenomeRNAi" id="55556"/>
<dbReference type="Pharos" id="Q7L5Y1">
    <property type="development level" value="Tbio"/>
</dbReference>
<dbReference type="PRO" id="PR:Q7L5Y1"/>
<dbReference type="Proteomes" id="UP000005640">
    <property type="component" value="Chromosome 18"/>
</dbReference>
<dbReference type="RNAct" id="Q7L5Y1">
    <property type="molecule type" value="protein"/>
</dbReference>
<dbReference type="Bgee" id="ENSG00000132199">
    <property type="expression patterns" value="Expressed in right uterine tube and 206 other cell types or tissues"/>
</dbReference>
<dbReference type="ExpressionAtlas" id="Q7L5Y1">
    <property type="expression patterns" value="baseline and differential"/>
</dbReference>
<dbReference type="GO" id="GO:0005739">
    <property type="term" value="C:mitochondrion"/>
    <property type="evidence" value="ECO:0006056"/>
    <property type="project" value="FlyBase"/>
</dbReference>
<dbReference type="GO" id="GO:0016836">
    <property type="term" value="F:hydro-lyase activity"/>
    <property type="evidence" value="ECO:0000318"/>
    <property type="project" value="GO_Central"/>
</dbReference>
<dbReference type="GO" id="GO:0016853">
    <property type="term" value="F:isomerase activity"/>
    <property type="evidence" value="ECO:0007669"/>
    <property type="project" value="UniProtKB-KW"/>
</dbReference>
<dbReference type="GO" id="GO:0050023">
    <property type="term" value="F:L-fuconate dehydratase activity"/>
    <property type="evidence" value="ECO:0000314"/>
    <property type="project" value="UniProtKB"/>
</dbReference>
<dbReference type="GO" id="GO:0000287">
    <property type="term" value="F:magnesium ion binding"/>
    <property type="evidence" value="ECO:0000314"/>
    <property type="project" value="UniProtKB"/>
</dbReference>
<dbReference type="GO" id="GO:0009063">
    <property type="term" value="P:amino acid catabolic process"/>
    <property type="evidence" value="ECO:0007669"/>
    <property type="project" value="InterPro"/>
</dbReference>
<dbReference type="GO" id="GO:0016052">
    <property type="term" value="P:carbohydrate catabolic process"/>
    <property type="evidence" value="ECO:0000314"/>
    <property type="project" value="UniProtKB"/>
</dbReference>
<dbReference type="CDD" id="cd03324">
    <property type="entry name" value="rTSbeta_L-fuconate_dehydratase"/>
    <property type="match status" value="1"/>
</dbReference>
<dbReference type="FunFam" id="3.20.20.120:FF:000007">
    <property type="entry name" value="Mitochondrial enolase superfamily member 1"/>
    <property type="match status" value="1"/>
</dbReference>
<dbReference type="FunFam" id="3.30.390.10:FF:000006">
    <property type="entry name" value="Mitochondrial enolase superfamily member 1"/>
    <property type="match status" value="1"/>
</dbReference>
<dbReference type="Gene3D" id="3.20.20.120">
    <property type="entry name" value="Enolase-like C-terminal domain"/>
    <property type="match status" value="1"/>
</dbReference>
<dbReference type="Gene3D" id="3.30.390.10">
    <property type="entry name" value="Enolase-like, N-terminal domain"/>
    <property type="match status" value="1"/>
</dbReference>
<dbReference type="InterPro" id="IPR036849">
    <property type="entry name" value="Enolase-like_C_sf"/>
</dbReference>
<dbReference type="InterPro" id="IPR029017">
    <property type="entry name" value="Enolase-like_N"/>
</dbReference>
<dbReference type="InterPro" id="IPR029065">
    <property type="entry name" value="Enolase_C-like"/>
</dbReference>
<dbReference type="InterPro" id="IPR034610">
    <property type="entry name" value="L-fuconate_dehydratase"/>
</dbReference>
<dbReference type="InterPro" id="IPR018110">
    <property type="entry name" value="Mandel_Rmase/mucon_lact_enz_CS"/>
</dbReference>
<dbReference type="InterPro" id="IPR013342">
    <property type="entry name" value="Mandelate_racemase_C"/>
</dbReference>
<dbReference type="InterPro" id="IPR013341">
    <property type="entry name" value="Mandelate_racemase_N_dom"/>
</dbReference>
<dbReference type="InterPro" id="IPR046945">
    <property type="entry name" value="RHMD-like"/>
</dbReference>
<dbReference type="PANTHER" id="PTHR13794">
    <property type="entry name" value="ENOLASE SUPERFAMILY, MANDELATE RACEMASE"/>
    <property type="match status" value="1"/>
</dbReference>
<dbReference type="PANTHER" id="PTHR13794:SF58">
    <property type="entry name" value="MITOCHONDRIAL ENOLASE SUPERFAMILY MEMBER 1"/>
    <property type="match status" value="1"/>
</dbReference>
<dbReference type="Pfam" id="PF13378">
    <property type="entry name" value="MR_MLE_C"/>
    <property type="match status" value="1"/>
</dbReference>
<dbReference type="Pfam" id="PF02746">
    <property type="entry name" value="MR_MLE_N"/>
    <property type="match status" value="1"/>
</dbReference>
<dbReference type="SFLD" id="SFLDS00001">
    <property type="entry name" value="Enolase"/>
    <property type="match status" value="1"/>
</dbReference>
<dbReference type="SFLD" id="SFLDF00111">
    <property type="entry name" value="L-fuconate_dehydratase"/>
    <property type="match status" value="1"/>
</dbReference>
<dbReference type="SMART" id="SM00922">
    <property type="entry name" value="MR_MLE"/>
    <property type="match status" value="1"/>
</dbReference>
<dbReference type="SUPFAM" id="SSF51604">
    <property type="entry name" value="Enolase C-terminal domain-like"/>
    <property type="match status" value="1"/>
</dbReference>
<dbReference type="SUPFAM" id="SSF54826">
    <property type="entry name" value="Enolase N-terminal domain-like"/>
    <property type="match status" value="1"/>
</dbReference>
<dbReference type="PROSITE" id="PS00909">
    <property type="entry name" value="MR_MLE_2"/>
    <property type="match status" value="1"/>
</dbReference>
<organism>
    <name type="scientific">Homo sapiens</name>
    <name type="common">Human</name>
    <dbReference type="NCBI Taxonomy" id="9606"/>
    <lineage>
        <taxon>Eukaryota</taxon>
        <taxon>Metazoa</taxon>
        <taxon>Chordata</taxon>
        <taxon>Craniata</taxon>
        <taxon>Vertebrata</taxon>
        <taxon>Euteleostomi</taxon>
        <taxon>Mammalia</taxon>
        <taxon>Eutheria</taxon>
        <taxon>Euarchontoglires</taxon>
        <taxon>Primates</taxon>
        <taxon>Haplorrhini</taxon>
        <taxon>Catarrhini</taxon>
        <taxon>Hominidae</taxon>
        <taxon>Homo</taxon>
    </lineage>
</organism>
<sequence>MVRGRISRLSVRDVRFPTSLGGHGADAMHTDPDYSAAYVVIETDAEDGIKGCGITFTLGKGTEVVVCAVNALAHHVLNKDLKDIVGDFRGFYRQLTSDGQLRWIGPEKGVVHLATAAVLNAVWDLWAKQEGKPVWKLLVDMDPRMLVSCIDFRYITDVLTEEDALEILQKGQIGKKEREKQMLAQGYPAYTTSCAWLGYSDDTLKQLCAQALKDGWTRFKVKVGADLQDDMRRCQIIRDMIGPEKTLMMDANQRWDVPEAVEWMSKLAKFKPLWIEEPTSPDDILGHATISKALVPLGIGIATGEQCHNRVIFKQLLQAKALQFLQIDSCRLGSVNENLSVLLMAKKFEIPVCPHAGGVGLCELVQHLIIFDYISVSASLENRVCEYVDHLHEHFKYPVMIQRASYMPPKDPGYSTEMKEESVKKHQYPDGEVWKKLLPAQEN</sequence>
<proteinExistence type="evidence at protein level"/>
<comment type="function">
    <text evidence="6">Plays a role in the catabolism of L-fucose, a sugar that is part of the carbohydrates that are attached to cellular glycoproteins. Catalyzes the dehydration of L-fuconate to 2-keto-3-deoxy-L-fuconate by the abstraction of the 2-proton to generate an enediolate intermediate that is stabilized by the magnesium ion (PubMed:24697329).</text>
</comment>
<comment type="catalytic activity">
    <reaction evidence="6">
        <text>L-fuconate = 2-dehydro-3-deoxy-L-fuconate + H2O</text>
        <dbReference type="Rhea" id="RHEA:22772"/>
        <dbReference type="ChEBI" id="CHEBI:15377"/>
        <dbReference type="ChEBI" id="CHEBI:21291"/>
        <dbReference type="ChEBI" id="CHEBI:37448"/>
        <dbReference type="EC" id="4.2.1.68"/>
    </reaction>
</comment>
<comment type="cofactor">
    <cofactor evidence="6">
        <name>Mg(2+)</name>
        <dbReference type="ChEBI" id="CHEBI:18420"/>
    </cofactor>
    <text evidence="6">Binds 1 Mg(2+) ion per subunit.</text>
</comment>
<comment type="biophysicochemical properties">
    <kinetics>
        <KM evidence="6">0.2 mM for L-fuconate</KM>
        <KM evidence="6">3 mM for L-galactonate</KM>
        <KM evidence="6">2 mM for D-arabinonate</KM>
        <KM evidence="6">4 mM for L-arabinonate</KM>
        <KM evidence="6">0.4 mM for D-ribonate</KM>
        <text>kcat is 0.5 sec(-1) for L-fuconate. kcat is 0.3 sec(-1) for L-galactonate. kcat is 0.3 sec(-1) for L-arabinonate. kcat is 0.04 sec(-1) for D-arabinonate. kcat is 0.002 sec(-1) for D-ribonate.</text>
    </kinetics>
</comment>
<comment type="subcellular location">
    <subcellularLocation>
        <location evidence="5">Mitochondrion</location>
    </subcellularLocation>
</comment>
<comment type="alternative products">
    <event type="alternative splicing"/>
    <isoform>
        <id>Q7L5Y1-1</id>
        <name>1</name>
        <name>rTSgamma</name>
        <sequence type="displayed"/>
    </isoform>
    <isoform>
        <id>Q7L5Y1-2</id>
        <name>2</name>
        <name>rTSalpha</name>
        <sequence type="described" ref="VSP_033311 VSP_033313"/>
    </isoform>
    <isoform>
        <id>Q7L5Y1-3</id>
        <name>3</name>
        <sequence type="described" ref="VSP_033312 VSP_033314"/>
    </isoform>
    <isoform>
        <id>Q7L5Y1-4</id>
        <name>4</name>
        <sequence type="described" ref="VSP_047153 VSP_047154"/>
    </isoform>
    <isoform>
        <id>Q7L5Y1-5</id>
        <name>5</name>
        <sequence type="described" ref="VSP_055243 VSP_047154"/>
    </isoform>
    <isoform>
        <id>Q7L5Y1-6</id>
        <name>6</name>
        <sequence type="described" ref="VSP_055242"/>
    </isoform>
    <isoform>
        <id>Q7L5Y1-7</id>
        <name>7</name>
        <sequence type="described" ref="VSP_055241"/>
    </isoform>
</comment>
<comment type="PTM">
    <text evidence="4">Could be sumoylated.</text>
</comment>
<comment type="disease" evidence="7">
    <disease id="DI-06506">
        <name>Dyskeratosis congenita, digenic</name>
        <acronym>DKCD</acronym>
        <description>A form of dyskeratosis congenita, a rare multisystem disorder caused by defective telomere maintenance. It is characterized by progressive bone marrow failure, and the clinical triad of reticulated skin hyperpigmentation, nail dystrophy, and mucosal leukoplakia. Common but variable features include premature graying, aplastic anemia, low platelets, osteoporosis, pulmonary fibrosis, and liver fibrosis among others. Early mortality is often associated with bone marrow failure, infections, fatal pulmonary complications, or malignancy. DKCD transmission pattern is consistent with digenic inheritance.</description>
        <dbReference type="MIM" id="620040"/>
    </disease>
    <text evidence="7">The disease is caused by variants affecting distinct genetic loci, including the gene represented in this entry. A common ENOSF1 haplotype (defined by rs699517, rs2790 and rs1512643) in the presence of TYMS germline variants result in severe thymidylate synthase deficiency and disease. The pathogenic mechanism involves increased expression of ENOSF1 relative to TYMS, and post-transcriptional inhibition of TYMS translation through ENOSF1-TYMS RNA-RNA interactions.</text>
</comment>
<comment type="similarity">
    <text evidence="14">Belongs to the mandelate racemase/muconate lactonizing enzyme family. ENOSF1 subfamily.</text>
</comment>
<comment type="caution">
    <text evidence="15 16 17">Was originally (PubMed:8493092) identified as a gene coding for an antisense RNA to thymidylate synthase, and was proposed to down-regulate TYMS activity (PubMed:8869746), possibly by promoting the degradation of TYMS mRNA via an antisense RNA-based mechanism (PubMed:12084460).</text>
</comment>
<comment type="sequence caution" evidence="14">
    <conflict type="erroneous initiation">
        <sequence resource="EMBL-CDS" id="AAG29537"/>
    </conflict>
    <text>Truncated N-terminus.</text>
</comment>
<comment type="sequence caution" evidence="14">
    <conflict type="erroneous initiation">
        <sequence resource="EMBL-CDS" id="CAA47471"/>
    </conflict>
    <text>Truncated N-terminus.</text>
</comment>
<protein>
    <recommendedName>
        <fullName>Mitochondrial enolase superfamily member 1</fullName>
        <ecNumber evidence="6">4.2.1.68</ecNumber>
    </recommendedName>
    <alternativeName>
        <fullName>Antisense RNA to thymidylate synthase</fullName>
        <shortName>rTS</shortName>
    </alternativeName>
    <alternativeName>
        <fullName>L-fuconate dehydratase</fullName>
    </alternativeName>
</protein>